<feature type="chain" id="PRO_0000294669" description="ATP-dependent rRNA helicase SPB4">
    <location>
        <begin position="1"/>
        <end position="601"/>
    </location>
</feature>
<feature type="domain" description="Helicase ATP-binding" evidence="3">
    <location>
        <begin position="45"/>
        <end position="228"/>
    </location>
</feature>
<feature type="domain" description="Helicase C-terminal" evidence="4">
    <location>
        <begin position="257"/>
        <end position="419"/>
    </location>
</feature>
<feature type="region of interest" description="Disordered" evidence="5">
    <location>
        <begin position="532"/>
        <end position="576"/>
    </location>
</feature>
<feature type="coiled-coil region" evidence="2">
    <location>
        <begin position="507"/>
        <end position="575"/>
    </location>
</feature>
<feature type="short sequence motif" description="Q motif" evidence="6">
    <location>
        <begin position="14"/>
        <end position="42"/>
    </location>
</feature>
<feature type="short sequence motif" description="DEAD box" evidence="6">
    <location>
        <begin position="176"/>
        <end position="179"/>
    </location>
</feature>
<feature type="compositionally biased region" description="Basic and acidic residues" evidence="5">
    <location>
        <begin position="532"/>
        <end position="554"/>
    </location>
</feature>
<feature type="binding site" evidence="3">
    <location>
        <begin position="58"/>
        <end position="65"/>
    </location>
    <ligand>
        <name>ATP</name>
        <dbReference type="ChEBI" id="CHEBI:30616"/>
    </ligand>
</feature>
<name>SPB4_PICGU</name>
<reference key="1">
    <citation type="journal article" date="2009" name="Nature">
        <title>Evolution of pathogenicity and sexual reproduction in eight Candida genomes.</title>
        <authorList>
            <person name="Butler G."/>
            <person name="Rasmussen M.D."/>
            <person name="Lin M.F."/>
            <person name="Santos M.A.S."/>
            <person name="Sakthikumar S."/>
            <person name="Munro C.A."/>
            <person name="Rheinbay E."/>
            <person name="Grabherr M."/>
            <person name="Forche A."/>
            <person name="Reedy J.L."/>
            <person name="Agrafioti I."/>
            <person name="Arnaud M.B."/>
            <person name="Bates S."/>
            <person name="Brown A.J.P."/>
            <person name="Brunke S."/>
            <person name="Costanzo M.C."/>
            <person name="Fitzpatrick D.A."/>
            <person name="de Groot P.W.J."/>
            <person name="Harris D."/>
            <person name="Hoyer L.L."/>
            <person name="Hube B."/>
            <person name="Klis F.M."/>
            <person name="Kodira C."/>
            <person name="Lennard N."/>
            <person name="Logue M.E."/>
            <person name="Martin R."/>
            <person name="Neiman A.M."/>
            <person name="Nikolaou E."/>
            <person name="Quail M.A."/>
            <person name="Quinn J."/>
            <person name="Santos M.C."/>
            <person name="Schmitzberger F.F."/>
            <person name="Sherlock G."/>
            <person name="Shah P."/>
            <person name="Silverstein K.A.T."/>
            <person name="Skrzypek M.S."/>
            <person name="Soll D."/>
            <person name="Staggs R."/>
            <person name="Stansfield I."/>
            <person name="Stumpf M.P.H."/>
            <person name="Sudbery P.E."/>
            <person name="Srikantha T."/>
            <person name="Zeng Q."/>
            <person name="Berman J."/>
            <person name="Berriman M."/>
            <person name="Heitman J."/>
            <person name="Gow N.A.R."/>
            <person name="Lorenz M.C."/>
            <person name="Birren B.W."/>
            <person name="Kellis M."/>
            <person name="Cuomo C.A."/>
        </authorList>
    </citation>
    <scope>NUCLEOTIDE SEQUENCE [LARGE SCALE GENOMIC DNA]</scope>
    <source>
        <strain>ATCC 6260 / CBS 566 / DSM 6381 / JCM 1539 / NBRC 10279 / NRRL Y-324</strain>
    </source>
</reference>
<protein>
    <recommendedName>
        <fullName evidence="6">ATP-dependent rRNA helicase SPB4</fullName>
        <ecNumber evidence="1">3.6.4.13</ecNumber>
    </recommendedName>
</protein>
<dbReference type="EC" id="3.6.4.13" evidence="1"/>
<dbReference type="EMBL" id="CH408157">
    <property type="protein sequence ID" value="EDK38327.2"/>
    <property type="molecule type" value="Genomic_DNA"/>
</dbReference>
<dbReference type="RefSeq" id="XP_001484696.1">
    <property type="nucleotide sequence ID" value="XM_001484646.1"/>
</dbReference>
<dbReference type="SMR" id="A5DGM4"/>
<dbReference type="FunCoup" id="A5DGM4">
    <property type="interactions" value="1180"/>
</dbReference>
<dbReference type="STRING" id="294746.A5DGM4"/>
<dbReference type="GeneID" id="5126586"/>
<dbReference type="KEGG" id="pgu:PGUG_02425"/>
<dbReference type="VEuPathDB" id="FungiDB:PGUG_02425"/>
<dbReference type="eggNOG" id="KOG0345">
    <property type="taxonomic scope" value="Eukaryota"/>
</dbReference>
<dbReference type="HOGENOM" id="CLU_003041_26_4_1"/>
<dbReference type="InParanoid" id="A5DGM4"/>
<dbReference type="OMA" id="AYKEHEC"/>
<dbReference type="OrthoDB" id="7396459at2759"/>
<dbReference type="Proteomes" id="UP000001997">
    <property type="component" value="Unassembled WGS sequence"/>
</dbReference>
<dbReference type="GO" id="GO:0030686">
    <property type="term" value="C:90S preribosome"/>
    <property type="evidence" value="ECO:0007669"/>
    <property type="project" value="EnsemblFungi"/>
</dbReference>
<dbReference type="GO" id="GO:0005829">
    <property type="term" value="C:cytosol"/>
    <property type="evidence" value="ECO:0007669"/>
    <property type="project" value="TreeGrafter"/>
</dbReference>
<dbReference type="GO" id="GO:0005730">
    <property type="term" value="C:nucleolus"/>
    <property type="evidence" value="ECO:0007669"/>
    <property type="project" value="UniProtKB-SubCell"/>
</dbReference>
<dbReference type="GO" id="GO:0005654">
    <property type="term" value="C:nucleoplasm"/>
    <property type="evidence" value="ECO:0007669"/>
    <property type="project" value="EnsemblFungi"/>
</dbReference>
<dbReference type="GO" id="GO:0030687">
    <property type="term" value="C:preribosome, large subunit precursor"/>
    <property type="evidence" value="ECO:0007669"/>
    <property type="project" value="EnsemblFungi"/>
</dbReference>
<dbReference type="GO" id="GO:0005524">
    <property type="term" value="F:ATP binding"/>
    <property type="evidence" value="ECO:0007669"/>
    <property type="project" value="UniProtKB-KW"/>
</dbReference>
<dbReference type="GO" id="GO:0016887">
    <property type="term" value="F:ATP hydrolysis activity"/>
    <property type="evidence" value="ECO:0007669"/>
    <property type="project" value="RHEA"/>
</dbReference>
<dbReference type="GO" id="GO:0003723">
    <property type="term" value="F:RNA binding"/>
    <property type="evidence" value="ECO:0007669"/>
    <property type="project" value="UniProtKB-KW"/>
</dbReference>
<dbReference type="GO" id="GO:0003724">
    <property type="term" value="F:RNA helicase activity"/>
    <property type="evidence" value="ECO:0007669"/>
    <property type="project" value="UniProtKB-EC"/>
</dbReference>
<dbReference type="GO" id="GO:1902626">
    <property type="term" value="P:assembly of large subunit precursor of preribosome"/>
    <property type="evidence" value="ECO:0007669"/>
    <property type="project" value="EnsemblFungi"/>
</dbReference>
<dbReference type="GO" id="GO:0000470">
    <property type="term" value="P:maturation of LSU-rRNA"/>
    <property type="evidence" value="ECO:0007669"/>
    <property type="project" value="EnsemblFungi"/>
</dbReference>
<dbReference type="CDD" id="cd17960">
    <property type="entry name" value="DEADc_DDX55"/>
    <property type="match status" value="1"/>
</dbReference>
<dbReference type="CDD" id="cd18787">
    <property type="entry name" value="SF2_C_DEAD"/>
    <property type="match status" value="1"/>
</dbReference>
<dbReference type="Gene3D" id="3.40.50.300">
    <property type="entry name" value="P-loop containing nucleotide triphosphate hydrolases"/>
    <property type="match status" value="2"/>
</dbReference>
<dbReference type="InterPro" id="IPR056330">
    <property type="entry name" value="CTT_SPB4"/>
</dbReference>
<dbReference type="InterPro" id="IPR011545">
    <property type="entry name" value="DEAD/DEAH_box_helicase_dom"/>
</dbReference>
<dbReference type="InterPro" id="IPR050079">
    <property type="entry name" value="DEAD_box_RNA_helicase"/>
</dbReference>
<dbReference type="InterPro" id="IPR014001">
    <property type="entry name" value="Helicase_ATP-bd"/>
</dbReference>
<dbReference type="InterPro" id="IPR001650">
    <property type="entry name" value="Helicase_C-like"/>
</dbReference>
<dbReference type="InterPro" id="IPR027417">
    <property type="entry name" value="P-loop_NTPase"/>
</dbReference>
<dbReference type="InterPro" id="IPR000629">
    <property type="entry name" value="RNA-helicase_DEAD-box_CS"/>
</dbReference>
<dbReference type="InterPro" id="IPR014014">
    <property type="entry name" value="RNA_helicase_DEAD_Q_motif"/>
</dbReference>
<dbReference type="InterPro" id="IPR025313">
    <property type="entry name" value="SPB4-like_CTE"/>
</dbReference>
<dbReference type="PANTHER" id="PTHR47959:SF1">
    <property type="entry name" value="ATP-DEPENDENT RNA HELICASE DBPA"/>
    <property type="match status" value="1"/>
</dbReference>
<dbReference type="PANTHER" id="PTHR47959">
    <property type="entry name" value="ATP-DEPENDENT RNA HELICASE RHLE-RELATED"/>
    <property type="match status" value="1"/>
</dbReference>
<dbReference type="Pfam" id="PF13959">
    <property type="entry name" value="CTE_SPB4"/>
    <property type="match status" value="1"/>
</dbReference>
<dbReference type="Pfam" id="PF23681">
    <property type="entry name" value="CTT_SPB4"/>
    <property type="match status" value="1"/>
</dbReference>
<dbReference type="Pfam" id="PF00270">
    <property type="entry name" value="DEAD"/>
    <property type="match status" value="1"/>
</dbReference>
<dbReference type="Pfam" id="PF00271">
    <property type="entry name" value="Helicase_C"/>
    <property type="match status" value="1"/>
</dbReference>
<dbReference type="SMART" id="SM00487">
    <property type="entry name" value="DEXDc"/>
    <property type="match status" value="1"/>
</dbReference>
<dbReference type="SMART" id="SM01178">
    <property type="entry name" value="DUF4217"/>
    <property type="match status" value="1"/>
</dbReference>
<dbReference type="SMART" id="SM00490">
    <property type="entry name" value="HELICc"/>
    <property type="match status" value="1"/>
</dbReference>
<dbReference type="SUPFAM" id="SSF52540">
    <property type="entry name" value="P-loop containing nucleoside triphosphate hydrolases"/>
    <property type="match status" value="1"/>
</dbReference>
<dbReference type="PROSITE" id="PS00039">
    <property type="entry name" value="DEAD_ATP_HELICASE"/>
    <property type="match status" value="1"/>
</dbReference>
<dbReference type="PROSITE" id="PS51192">
    <property type="entry name" value="HELICASE_ATP_BIND_1"/>
    <property type="match status" value="1"/>
</dbReference>
<dbReference type="PROSITE" id="PS51194">
    <property type="entry name" value="HELICASE_CTER"/>
    <property type="match status" value="1"/>
</dbReference>
<dbReference type="PROSITE" id="PS51195">
    <property type="entry name" value="Q_MOTIF"/>
    <property type="match status" value="1"/>
</dbReference>
<sequence length="601" mass="67962">MLIARNFILMSKSLAWSQASLQPWIHDAIDSLGFRSMTPVQASTIPLFCGNKDVVVEAVTGSGKTLAFAIPVLERVTKCMKENRGSSGLYGIVISPTRELANQINTVFHTLLQFYPEDQPPIKTQLIVGSLATVREDLNAFAENKPQIIIATPGRLLDFFSSNAVKRSTVEMVVLDEADRLLDISFQNDVVSILKKLPKQRRTGLFSATLSSAGDSIFRTGMSNPVKISVNSNKAESKPQSLTVNYMMVNPETKIAVLINMLSTLQYKKCIVYFPTCASVKYFYSVFQKLHPLEDVNLTSIHGQLLAKARLKAMNKFTEGDVRTSKHVLLTTDVAARGIDIPEVDLVIQLDPPTDPDMFLHRCGRTGRANKVGRAIVMLNNNALESDYVDFMEVKGLKMSEVESPDVIDAYKAFSKNLRNLMLQDRAFHETAIKAYVGFVRYYSKHAATSIFRLQTLDYIGLAKAYGLLRLPKMPESRFVPNDRMPEDGWLGEKIDMNKYAYADPAKEKIRLETMEEEWNKKVNDAKRRKELKVKNEAWSSKNEKKEGKQERREKMKRKREAIEKQIMNESSDEETVVDWKDLVREKKQKTSGISGSFDDL</sequence>
<accession>A5DGM4</accession>
<evidence type="ECO:0000250" key="1">
    <source>
        <dbReference type="UniProtKB" id="P25808"/>
    </source>
</evidence>
<evidence type="ECO:0000255" key="2"/>
<evidence type="ECO:0000255" key="3">
    <source>
        <dbReference type="PROSITE-ProRule" id="PRU00541"/>
    </source>
</evidence>
<evidence type="ECO:0000255" key="4">
    <source>
        <dbReference type="PROSITE-ProRule" id="PRU00542"/>
    </source>
</evidence>
<evidence type="ECO:0000256" key="5">
    <source>
        <dbReference type="SAM" id="MobiDB-lite"/>
    </source>
</evidence>
<evidence type="ECO:0000305" key="6"/>
<gene>
    <name evidence="1" type="primary">SPB4</name>
    <name type="ORF">PGUG_02425</name>
</gene>
<keyword id="KW-0067">ATP-binding</keyword>
<keyword id="KW-0175">Coiled coil</keyword>
<keyword id="KW-0347">Helicase</keyword>
<keyword id="KW-0378">Hydrolase</keyword>
<keyword id="KW-0547">Nucleotide-binding</keyword>
<keyword id="KW-0539">Nucleus</keyword>
<keyword id="KW-1185">Reference proteome</keyword>
<keyword id="KW-0690">Ribosome biogenesis</keyword>
<keyword id="KW-0694">RNA-binding</keyword>
<keyword id="KW-0698">rRNA processing</keyword>
<organism>
    <name type="scientific">Meyerozyma guilliermondii (strain ATCC 6260 / CBS 566 / DSM 6381 / JCM 1539 / NBRC 10279 / NRRL Y-324)</name>
    <name type="common">Yeast</name>
    <name type="synonym">Candida guilliermondii</name>
    <dbReference type="NCBI Taxonomy" id="294746"/>
    <lineage>
        <taxon>Eukaryota</taxon>
        <taxon>Fungi</taxon>
        <taxon>Dikarya</taxon>
        <taxon>Ascomycota</taxon>
        <taxon>Saccharomycotina</taxon>
        <taxon>Pichiomycetes</taxon>
        <taxon>Debaryomycetaceae</taxon>
        <taxon>Meyerozyma</taxon>
    </lineage>
</organism>
<comment type="function">
    <text evidence="1">ATP-binding RNA helicase involved in the biogenesis of 60S ribosomal subunits. Binds 90S pre-ribosomal particles and dissociates from pre-60S ribosomal particles after processing of 27SB pre-rRNA. Required for the normal formation of 18S rRNA through the processing of pre-rRNAs at sites A0, A1 and A2, and the normal formation of 25S and 5.8S rRNAs through the processing of pre-rRNAs at sites C1 and C2.</text>
</comment>
<comment type="catalytic activity">
    <reaction evidence="1">
        <text>ATP + H2O = ADP + phosphate + H(+)</text>
        <dbReference type="Rhea" id="RHEA:13065"/>
        <dbReference type="ChEBI" id="CHEBI:15377"/>
        <dbReference type="ChEBI" id="CHEBI:15378"/>
        <dbReference type="ChEBI" id="CHEBI:30616"/>
        <dbReference type="ChEBI" id="CHEBI:43474"/>
        <dbReference type="ChEBI" id="CHEBI:456216"/>
        <dbReference type="EC" id="3.6.4.13"/>
    </reaction>
</comment>
<comment type="subunit">
    <text evidence="1">Component of pre-60S ribosomal complexes.</text>
</comment>
<comment type="subcellular location">
    <subcellularLocation>
        <location evidence="1">Nucleus</location>
        <location evidence="1">Nucleolus</location>
    </subcellularLocation>
</comment>
<comment type="domain">
    <text>The Q motif is unique to and characteristic of the DEAD box family of RNA helicases and controls ATP binding and hydrolysis.</text>
</comment>
<comment type="similarity">
    <text evidence="6">Belongs to the DEAD box helicase family. DDX55/SPB4 subfamily.</text>
</comment>
<proteinExistence type="inferred from homology"/>